<dbReference type="EC" id="1.13.11.54" evidence="1"/>
<dbReference type="EC" id="1.13.11.53" evidence="1"/>
<dbReference type="EMBL" id="CP001011">
    <property type="protein sequence ID" value="ACB92762.1"/>
    <property type="molecule type" value="Genomic_DNA"/>
</dbReference>
<dbReference type="RefSeq" id="WP_004088322.1">
    <property type="nucleotide sequence ID" value="NC_010577.1"/>
</dbReference>
<dbReference type="SMR" id="B2I5X3"/>
<dbReference type="KEGG" id="xfn:XfasM23_1344"/>
<dbReference type="HOGENOM" id="CLU_125400_0_0_6"/>
<dbReference type="UniPathway" id="UPA00904">
    <property type="reaction ID" value="UER00878"/>
</dbReference>
<dbReference type="Proteomes" id="UP000001698">
    <property type="component" value="Chromosome"/>
</dbReference>
<dbReference type="GO" id="GO:0010308">
    <property type="term" value="F:acireductone dioxygenase (Ni2+-requiring) activity"/>
    <property type="evidence" value="ECO:0007669"/>
    <property type="project" value="UniProtKB-UniRule"/>
</dbReference>
<dbReference type="GO" id="GO:0010309">
    <property type="term" value="F:acireductone dioxygenase [iron(II)-requiring] activity"/>
    <property type="evidence" value="ECO:0007669"/>
    <property type="project" value="UniProtKB-UniRule"/>
</dbReference>
<dbReference type="GO" id="GO:0005506">
    <property type="term" value="F:iron ion binding"/>
    <property type="evidence" value="ECO:0007669"/>
    <property type="project" value="UniProtKB-UniRule"/>
</dbReference>
<dbReference type="GO" id="GO:0016151">
    <property type="term" value="F:nickel cation binding"/>
    <property type="evidence" value="ECO:0007669"/>
    <property type="project" value="UniProtKB-UniRule"/>
</dbReference>
<dbReference type="GO" id="GO:0019509">
    <property type="term" value="P:L-methionine salvage from methylthioadenosine"/>
    <property type="evidence" value="ECO:0007669"/>
    <property type="project" value="UniProtKB-UniRule"/>
</dbReference>
<dbReference type="GO" id="GO:0019284">
    <property type="term" value="P:L-methionine salvage from S-adenosylmethionine"/>
    <property type="evidence" value="ECO:0007669"/>
    <property type="project" value="InterPro"/>
</dbReference>
<dbReference type="CDD" id="cd02232">
    <property type="entry name" value="cupin_ARD"/>
    <property type="match status" value="1"/>
</dbReference>
<dbReference type="Gene3D" id="2.60.120.10">
    <property type="entry name" value="Jelly Rolls"/>
    <property type="match status" value="1"/>
</dbReference>
<dbReference type="HAMAP" id="MF_01682">
    <property type="entry name" value="Salvage_MtnD"/>
    <property type="match status" value="1"/>
</dbReference>
<dbReference type="InterPro" id="IPR004313">
    <property type="entry name" value="ARD"/>
</dbReference>
<dbReference type="InterPro" id="IPR023956">
    <property type="entry name" value="ARD_bac"/>
</dbReference>
<dbReference type="InterPro" id="IPR014710">
    <property type="entry name" value="RmlC-like_jellyroll"/>
</dbReference>
<dbReference type="InterPro" id="IPR011051">
    <property type="entry name" value="RmlC_Cupin_sf"/>
</dbReference>
<dbReference type="PANTHER" id="PTHR23418">
    <property type="entry name" value="ACIREDUCTONE DIOXYGENASE"/>
    <property type="match status" value="1"/>
</dbReference>
<dbReference type="PANTHER" id="PTHR23418:SF0">
    <property type="entry name" value="ACIREDUCTONE DIOXYGENASE"/>
    <property type="match status" value="1"/>
</dbReference>
<dbReference type="Pfam" id="PF03079">
    <property type="entry name" value="ARD"/>
    <property type="match status" value="1"/>
</dbReference>
<dbReference type="SUPFAM" id="SSF51182">
    <property type="entry name" value="RmlC-like cupins"/>
    <property type="match status" value="1"/>
</dbReference>
<reference key="1">
    <citation type="journal article" date="2010" name="J. Bacteriol.">
        <title>Whole genome sequences of two Xylella fastidiosa strains (M12 and M23) causing almond leaf scorch disease in California.</title>
        <authorList>
            <person name="Chen J."/>
            <person name="Xie G."/>
            <person name="Han S."/>
            <person name="Chertkov O."/>
            <person name="Sims D."/>
            <person name="Civerolo E.L."/>
        </authorList>
    </citation>
    <scope>NUCLEOTIDE SEQUENCE [LARGE SCALE GENOMIC DNA]</scope>
    <source>
        <strain>M23</strain>
    </source>
</reference>
<keyword id="KW-0028">Amino-acid biosynthesis</keyword>
<keyword id="KW-0223">Dioxygenase</keyword>
<keyword id="KW-0408">Iron</keyword>
<keyword id="KW-0479">Metal-binding</keyword>
<keyword id="KW-0486">Methionine biosynthesis</keyword>
<keyword id="KW-0533">Nickel</keyword>
<keyword id="KW-0560">Oxidoreductase</keyword>
<name>MTND_XYLF2</name>
<comment type="function">
    <text evidence="1">Catalyzes 2 different reactions between oxygen and the acireductone 1,2-dihydroxy-3-keto-5-methylthiopentene (DHK-MTPene) depending upon the metal bound in the active site. Fe-containing acireductone dioxygenase (Fe-ARD) produces formate and 2-keto-4-methylthiobutyrate (KMTB), the alpha-ketoacid precursor of methionine in the methionine recycle pathway. Ni-containing acireductone dioxygenase (Ni-ARD) produces methylthiopropionate, carbon monoxide and formate, and does not lie on the methionine recycle pathway.</text>
</comment>
<comment type="catalytic activity">
    <reaction evidence="1">
        <text>1,2-dihydroxy-5-(methylsulfanyl)pent-1-en-3-one + O2 = 3-(methylsulfanyl)propanoate + CO + formate + 2 H(+)</text>
        <dbReference type="Rhea" id="RHEA:14161"/>
        <dbReference type="ChEBI" id="CHEBI:15378"/>
        <dbReference type="ChEBI" id="CHEBI:15379"/>
        <dbReference type="ChEBI" id="CHEBI:15740"/>
        <dbReference type="ChEBI" id="CHEBI:17245"/>
        <dbReference type="ChEBI" id="CHEBI:49016"/>
        <dbReference type="ChEBI" id="CHEBI:49252"/>
        <dbReference type="EC" id="1.13.11.53"/>
    </reaction>
</comment>
<comment type="catalytic activity">
    <reaction evidence="1">
        <text>1,2-dihydroxy-5-(methylsulfanyl)pent-1-en-3-one + O2 = 4-methylsulfanyl-2-oxobutanoate + formate + 2 H(+)</text>
        <dbReference type="Rhea" id="RHEA:24504"/>
        <dbReference type="ChEBI" id="CHEBI:15378"/>
        <dbReference type="ChEBI" id="CHEBI:15379"/>
        <dbReference type="ChEBI" id="CHEBI:15740"/>
        <dbReference type="ChEBI" id="CHEBI:16723"/>
        <dbReference type="ChEBI" id="CHEBI:49252"/>
        <dbReference type="EC" id="1.13.11.54"/>
    </reaction>
</comment>
<comment type="cofactor">
    <cofactor evidence="1">
        <name>Fe(2+)</name>
        <dbReference type="ChEBI" id="CHEBI:29033"/>
    </cofactor>
    <text evidence="1">Binds 1 Fe(2+) cation per monomer.</text>
</comment>
<comment type="cofactor">
    <cofactor evidence="1">
        <name>Ni(2+)</name>
        <dbReference type="ChEBI" id="CHEBI:49786"/>
    </cofactor>
    <text evidence="1">Binds 1 nickel ion per monomer.</text>
</comment>
<comment type="pathway">
    <text evidence="1">Amino-acid biosynthesis; L-methionine biosynthesis via salvage pathway; L-methionine from S-methyl-5-thio-alpha-D-ribose 1-phosphate: step 5/6.</text>
</comment>
<comment type="subunit">
    <text evidence="1">Monomer.</text>
</comment>
<comment type="similarity">
    <text evidence="1">Belongs to the acireductone dioxygenase (ARD) family.</text>
</comment>
<protein>
    <recommendedName>
        <fullName evidence="1">Acireductone dioxygenase</fullName>
    </recommendedName>
    <alternativeName>
        <fullName evidence="1">1,2-dihydroxy-3-keto-5-methylthiopentene dioxygenase</fullName>
        <shortName evidence="1">DHK-MTPene dioxygenase</shortName>
    </alternativeName>
    <alternativeName>
        <fullName evidence="1">Acireductone dioxygenase (Fe(2+)-requiring)</fullName>
        <shortName evidence="1">ARD'</shortName>
        <shortName evidence="1">Fe-ARD</shortName>
        <ecNumber evidence="1">1.13.11.54</ecNumber>
    </alternativeName>
    <alternativeName>
        <fullName evidence="1">Acireductone dioxygenase (Ni(2+)-requiring)</fullName>
        <shortName evidence="1">ARD</shortName>
        <shortName evidence="1">Ni-ARD</shortName>
        <ecNumber evidence="1">1.13.11.53</ecNumber>
    </alternativeName>
</protein>
<proteinExistence type="inferred from homology"/>
<accession>B2I5X3</accession>
<gene>
    <name evidence="1" type="primary">mtnD</name>
    <name type="ordered locus">XfasM23_1344</name>
</gene>
<organism>
    <name type="scientific">Xylella fastidiosa (strain M23)</name>
    <dbReference type="NCBI Taxonomy" id="405441"/>
    <lineage>
        <taxon>Bacteria</taxon>
        <taxon>Pseudomonadati</taxon>
        <taxon>Pseudomonadota</taxon>
        <taxon>Gammaproteobacteria</taxon>
        <taxon>Lysobacterales</taxon>
        <taxon>Lysobacteraceae</taxon>
        <taxon>Xylella</taxon>
    </lineage>
</organism>
<feature type="chain" id="PRO_0000359256" description="Acireductone dioxygenase">
    <location>
        <begin position="1"/>
        <end position="188"/>
    </location>
</feature>
<feature type="binding site" evidence="1">
    <location>
        <position position="97"/>
    </location>
    <ligand>
        <name>Fe(2+)</name>
        <dbReference type="ChEBI" id="CHEBI:29033"/>
    </ligand>
</feature>
<feature type="binding site" evidence="1">
    <location>
        <position position="97"/>
    </location>
    <ligand>
        <name>Ni(2+)</name>
        <dbReference type="ChEBI" id="CHEBI:49786"/>
    </ligand>
</feature>
<feature type="binding site" evidence="1">
    <location>
        <position position="99"/>
    </location>
    <ligand>
        <name>Fe(2+)</name>
        <dbReference type="ChEBI" id="CHEBI:29033"/>
    </ligand>
</feature>
<feature type="binding site" evidence="1">
    <location>
        <position position="99"/>
    </location>
    <ligand>
        <name>Ni(2+)</name>
        <dbReference type="ChEBI" id="CHEBI:49786"/>
    </ligand>
</feature>
<feature type="binding site" evidence="1">
    <location>
        <position position="103"/>
    </location>
    <ligand>
        <name>Fe(2+)</name>
        <dbReference type="ChEBI" id="CHEBI:29033"/>
    </ligand>
</feature>
<feature type="binding site" evidence="1">
    <location>
        <position position="103"/>
    </location>
    <ligand>
        <name>Ni(2+)</name>
        <dbReference type="ChEBI" id="CHEBI:49786"/>
    </ligand>
</feature>
<feature type="binding site" evidence="1">
    <location>
        <position position="141"/>
    </location>
    <ligand>
        <name>Fe(2+)</name>
        <dbReference type="ChEBI" id="CHEBI:29033"/>
    </ligand>
</feature>
<feature type="binding site" evidence="1">
    <location>
        <position position="141"/>
    </location>
    <ligand>
        <name>Ni(2+)</name>
        <dbReference type="ChEBI" id="CHEBI:49786"/>
    </ligand>
</feature>
<feature type="site" description="May play a role in metal incorporation in vivo" evidence="1">
    <location>
        <position position="96"/>
    </location>
</feature>
<feature type="site" description="May play a role in transmitting local conformational changes" evidence="1">
    <location>
        <position position="102"/>
    </location>
</feature>
<feature type="site" description="Important to generate the dianion" evidence="1">
    <location>
        <position position="105"/>
    </location>
</feature>
<evidence type="ECO:0000255" key="1">
    <source>
        <dbReference type="HAMAP-Rule" id="MF_01682"/>
    </source>
</evidence>
<sequence>MSRLRIFDDHTPDTPFFVSKEQAQITAELHKIGITFERWEATQAIEPGATAEQVMAAYRTDIDRLIATHGFKTVDVISIAPDNAKREEMRAKFLEEHFHKEDEVRFFVAGSGLFTVHSGNKVYEIECVKNDLIAIPDGTLHWFDMGAAPYFVAIRFFTEPDGWVGHFTGTDIAQRFPRYIPEGCQSAH</sequence>